<reference key="1">
    <citation type="journal article" date="2002" name="Proc. Natl. Acad. Sci. U.S.A.">
        <title>Complete genome sequence of Clostridium perfringens, an anaerobic flesh-eater.</title>
        <authorList>
            <person name="Shimizu T."/>
            <person name="Ohtani K."/>
            <person name="Hirakawa H."/>
            <person name="Ohshima K."/>
            <person name="Yamashita A."/>
            <person name="Shiba T."/>
            <person name="Ogasawara N."/>
            <person name="Hattori M."/>
            <person name="Kuhara S."/>
            <person name="Hayashi H."/>
        </authorList>
    </citation>
    <scope>NUCLEOTIDE SEQUENCE [LARGE SCALE GENOMIC DNA]</scope>
    <source>
        <strain>13 / Type A</strain>
    </source>
</reference>
<keyword id="KW-0413">Isomerase</keyword>
<keyword id="KW-1185">Reference proteome</keyword>
<keyword id="KW-0819">tRNA processing</keyword>
<evidence type="ECO:0000255" key="1">
    <source>
        <dbReference type="HAMAP-Rule" id="MF_00171"/>
    </source>
</evidence>
<name>TRUA2_CLOPE</name>
<gene>
    <name evidence="1" type="primary">truA2</name>
    <name type="synonym">truA</name>
    <name type="ordered locus">CPE2371</name>
</gene>
<comment type="function">
    <text evidence="1">Formation of pseudouridine at positions 38, 39 and 40 in the anticodon stem and loop of transfer RNAs.</text>
</comment>
<comment type="catalytic activity">
    <reaction evidence="1">
        <text>uridine(38/39/40) in tRNA = pseudouridine(38/39/40) in tRNA</text>
        <dbReference type="Rhea" id="RHEA:22376"/>
        <dbReference type="Rhea" id="RHEA-COMP:10085"/>
        <dbReference type="Rhea" id="RHEA-COMP:10087"/>
        <dbReference type="ChEBI" id="CHEBI:65314"/>
        <dbReference type="ChEBI" id="CHEBI:65315"/>
        <dbReference type="EC" id="5.4.99.12"/>
    </reaction>
</comment>
<comment type="subunit">
    <text evidence="1">Homodimer.</text>
</comment>
<comment type="similarity">
    <text evidence="1">Belongs to the tRNA pseudouridine synthase TruA family.</text>
</comment>
<sequence length="244" mass="27656">MRNIKLTIEYDGTSYFGWQKQPIGNTIQQKVEEAIKKVTKEEVEILGSSRTDSGVHAKAYVANFKTNSNIPGKNFKAALNSKLPKDIVIINSEEVAEDFHARYMTTGKTYCYTILNREEPPALERNYVYHVKKQLDVESMKEACKYFLGKHDFKAFQRPGGTVKTSVRTITDIHIETEGNKIKIYVSADGFLYNMVRLIVGTLLKVGRGKEKPEYIKEVIDSGDRKKAGICVPPTGLCLEKVFY</sequence>
<accession>Q8XHV5</accession>
<feature type="chain" id="PRO_0000057365" description="tRNA pseudouridine synthase A 2">
    <location>
        <begin position="1"/>
        <end position="244"/>
    </location>
</feature>
<feature type="active site" description="Nucleophile" evidence="1">
    <location>
        <position position="52"/>
    </location>
</feature>
<feature type="binding site" evidence="1">
    <location>
        <position position="110"/>
    </location>
    <ligand>
        <name>substrate</name>
    </ligand>
</feature>
<proteinExistence type="inferred from homology"/>
<dbReference type="EC" id="5.4.99.12" evidence="1"/>
<dbReference type="EMBL" id="BA000016">
    <property type="protein sequence ID" value="BAB82077.1"/>
    <property type="molecule type" value="Genomic_DNA"/>
</dbReference>
<dbReference type="RefSeq" id="WP_011010900.1">
    <property type="nucleotide sequence ID" value="NC_003366.1"/>
</dbReference>
<dbReference type="SMR" id="Q8XHV5"/>
<dbReference type="STRING" id="195102.gene:10491688"/>
<dbReference type="KEGG" id="cpe:CPE2371"/>
<dbReference type="HOGENOM" id="CLU_014673_0_1_9"/>
<dbReference type="Proteomes" id="UP000000818">
    <property type="component" value="Chromosome"/>
</dbReference>
<dbReference type="GO" id="GO:0003723">
    <property type="term" value="F:RNA binding"/>
    <property type="evidence" value="ECO:0007669"/>
    <property type="project" value="InterPro"/>
</dbReference>
<dbReference type="GO" id="GO:0160147">
    <property type="term" value="F:tRNA pseudouridine(38-40) synthase activity"/>
    <property type="evidence" value="ECO:0007669"/>
    <property type="project" value="UniProtKB-EC"/>
</dbReference>
<dbReference type="GO" id="GO:0031119">
    <property type="term" value="P:tRNA pseudouridine synthesis"/>
    <property type="evidence" value="ECO:0007669"/>
    <property type="project" value="UniProtKB-UniRule"/>
</dbReference>
<dbReference type="CDD" id="cd02570">
    <property type="entry name" value="PseudoU_synth_EcTruA"/>
    <property type="match status" value="1"/>
</dbReference>
<dbReference type="FunFam" id="3.30.70.580:FF:000001">
    <property type="entry name" value="tRNA pseudouridine synthase A"/>
    <property type="match status" value="1"/>
</dbReference>
<dbReference type="Gene3D" id="3.30.70.660">
    <property type="entry name" value="Pseudouridine synthase I, catalytic domain, C-terminal subdomain"/>
    <property type="match status" value="1"/>
</dbReference>
<dbReference type="Gene3D" id="3.30.70.580">
    <property type="entry name" value="Pseudouridine synthase I, catalytic domain, N-terminal subdomain"/>
    <property type="match status" value="1"/>
</dbReference>
<dbReference type="HAMAP" id="MF_00171">
    <property type="entry name" value="TruA"/>
    <property type="match status" value="1"/>
</dbReference>
<dbReference type="InterPro" id="IPR020103">
    <property type="entry name" value="PsdUridine_synth_cat_dom_sf"/>
</dbReference>
<dbReference type="InterPro" id="IPR001406">
    <property type="entry name" value="PsdUridine_synth_TruA"/>
</dbReference>
<dbReference type="InterPro" id="IPR020097">
    <property type="entry name" value="PsdUridine_synth_TruA_a/b_dom"/>
</dbReference>
<dbReference type="InterPro" id="IPR020095">
    <property type="entry name" value="PsdUridine_synth_TruA_C"/>
</dbReference>
<dbReference type="InterPro" id="IPR020094">
    <property type="entry name" value="TruA/RsuA/RluB/E/F_N"/>
</dbReference>
<dbReference type="NCBIfam" id="TIGR00071">
    <property type="entry name" value="hisT_truA"/>
    <property type="match status" value="1"/>
</dbReference>
<dbReference type="PANTHER" id="PTHR11142">
    <property type="entry name" value="PSEUDOURIDYLATE SYNTHASE"/>
    <property type="match status" value="1"/>
</dbReference>
<dbReference type="PANTHER" id="PTHR11142:SF0">
    <property type="entry name" value="TRNA PSEUDOURIDINE SYNTHASE-LIKE 1"/>
    <property type="match status" value="1"/>
</dbReference>
<dbReference type="Pfam" id="PF01416">
    <property type="entry name" value="PseudoU_synth_1"/>
    <property type="match status" value="2"/>
</dbReference>
<dbReference type="PIRSF" id="PIRSF001430">
    <property type="entry name" value="tRNA_psdUrid_synth"/>
    <property type="match status" value="1"/>
</dbReference>
<dbReference type="SUPFAM" id="SSF55120">
    <property type="entry name" value="Pseudouridine synthase"/>
    <property type="match status" value="1"/>
</dbReference>
<protein>
    <recommendedName>
        <fullName evidence="1">tRNA pseudouridine synthase A 2</fullName>
        <ecNumber evidence="1">5.4.99.12</ecNumber>
    </recommendedName>
    <alternativeName>
        <fullName evidence="1">tRNA pseudouridine(38-40) synthase</fullName>
    </alternativeName>
    <alternativeName>
        <fullName evidence="1">tRNA pseudouridylate synthase I 2</fullName>
    </alternativeName>
    <alternativeName>
        <fullName evidence="1">tRNA-uridine isomerase I 2</fullName>
    </alternativeName>
</protein>
<organism>
    <name type="scientific">Clostridium perfringens (strain 13 / Type A)</name>
    <dbReference type="NCBI Taxonomy" id="195102"/>
    <lineage>
        <taxon>Bacteria</taxon>
        <taxon>Bacillati</taxon>
        <taxon>Bacillota</taxon>
        <taxon>Clostridia</taxon>
        <taxon>Eubacteriales</taxon>
        <taxon>Clostridiaceae</taxon>
        <taxon>Clostridium</taxon>
    </lineage>
</organism>